<feature type="chain" id="PRO_0000204438" description="Isoflavone-7-O-methyltransferase 9">
    <location>
        <begin position="1"/>
        <end position="352"/>
    </location>
</feature>
<feature type="active site" description="Proton acceptor" evidence="1">
    <location>
        <position position="257"/>
    </location>
</feature>
<feature type="binding site">
    <location>
        <begin position="118"/>
        <end position="127"/>
    </location>
    <ligand>
        <name>substrate</name>
    </ligand>
</feature>
<feature type="binding site" evidence="1">
    <location>
        <position position="196"/>
    </location>
    <ligand>
        <name>S-adenosyl-L-methionine</name>
        <dbReference type="ChEBI" id="CHEBI:59789"/>
    </ligand>
</feature>
<feature type="binding site" evidence="1">
    <location>
        <position position="219"/>
    </location>
    <ligand>
        <name>S-adenosyl-L-methionine</name>
        <dbReference type="ChEBI" id="CHEBI:59789"/>
    </ligand>
</feature>
<feature type="binding site" evidence="1">
    <location>
        <position position="239"/>
    </location>
    <ligand>
        <name>S-adenosyl-L-methionine</name>
        <dbReference type="ChEBI" id="CHEBI:59789"/>
    </ligand>
</feature>
<feature type="binding site" evidence="1">
    <location>
        <position position="240"/>
    </location>
    <ligand>
        <name>S-adenosyl-L-methionine</name>
        <dbReference type="ChEBI" id="CHEBI:59789"/>
    </ligand>
</feature>
<feature type="binding site" evidence="1">
    <location>
        <position position="253"/>
    </location>
    <ligand>
        <name>S-adenosyl-L-methionine</name>
        <dbReference type="ChEBI" id="CHEBI:59789"/>
    </ligand>
</feature>
<proteinExistence type="evidence at transcript level"/>
<keyword id="KW-0489">Methyltransferase</keyword>
<keyword id="KW-0949">S-adenosyl-L-methionine</keyword>
<keyword id="KW-0808">Transferase</keyword>
<reference key="1">
    <citation type="journal article" date="1998" name="Plant Mol. Biol.">
        <title>Stress responses in alfalfa (Medicago sativa L). XXII. cDNA cloning and characterization of an elicitor-inducible isoflavone 7-O-methyltransferase.</title>
        <authorList>
            <person name="He X.-Z."/>
            <person name="Reddy J.T."/>
            <person name="Dixon R.A."/>
        </authorList>
    </citation>
    <scope>NUCLEOTIDE SEQUENCE [MRNA]</scope>
</reference>
<evidence type="ECO:0000255" key="1">
    <source>
        <dbReference type="PROSITE-ProRule" id="PRU01020"/>
    </source>
</evidence>
<name>7OMT9_MEDSA</name>
<protein>
    <recommendedName>
        <fullName>Isoflavone-7-O-methyltransferase 9</fullName>
        <ecNumber>2.1.1.150</ecNumber>
    </recommendedName>
    <alternativeName>
        <fullName>7 IOMT-9</fullName>
    </alternativeName>
    <alternativeName>
        <fullName>Isoflavone-O-methyltransferase 9</fullName>
    </alternativeName>
</protein>
<dbReference type="EC" id="2.1.1.150"/>
<dbReference type="EMBL" id="AF000976">
    <property type="protein sequence ID" value="AAC49927.1"/>
    <property type="molecule type" value="mRNA"/>
</dbReference>
<dbReference type="PIR" id="T09254">
    <property type="entry name" value="T09254"/>
</dbReference>
<dbReference type="SMR" id="O22309"/>
<dbReference type="KEGG" id="ag:AAC49927"/>
<dbReference type="UniPathway" id="UPA00902"/>
<dbReference type="GO" id="GO:0033800">
    <property type="term" value="F:isoflavone 7-O-methyltransferase activity"/>
    <property type="evidence" value="ECO:0007669"/>
    <property type="project" value="UniProtKB-EC"/>
</dbReference>
<dbReference type="GO" id="GO:0046983">
    <property type="term" value="F:protein dimerization activity"/>
    <property type="evidence" value="ECO:0007669"/>
    <property type="project" value="InterPro"/>
</dbReference>
<dbReference type="GO" id="GO:0032259">
    <property type="term" value="P:methylation"/>
    <property type="evidence" value="ECO:0007669"/>
    <property type="project" value="UniProtKB-KW"/>
</dbReference>
<dbReference type="FunFam" id="1.10.10.10:FF:000213">
    <property type="entry name" value="Coniferyl alcohol 9-O-methyltransferase"/>
    <property type="match status" value="1"/>
</dbReference>
<dbReference type="FunFam" id="3.40.50.150:FF:000057">
    <property type="entry name" value="O-methyltransferase ZRP4"/>
    <property type="match status" value="1"/>
</dbReference>
<dbReference type="Gene3D" id="3.40.50.150">
    <property type="entry name" value="Vaccinia Virus protein VP39"/>
    <property type="match status" value="1"/>
</dbReference>
<dbReference type="Gene3D" id="1.10.10.10">
    <property type="entry name" value="Winged helix-like DNA-binding domain superfamily/Winged helix DNA-binding domain"/>
    <property type="match status" value="1"/>
</dbReference>
<dbReference type="InterPro" id="IPR016461">
    <property type="entry name" value="COMT-like"/>
</dbReference>
<dbReference type="InterPro" id="IPR001077">
    <property type="entry name" value="O_MeTrfase_dom"/>
</dbReference>
<dbReference type="InterPro" id="IPR012967">
    <property type="entry name" value="Plant_O-MeTrfase_dimerisation"/>
</dbReference>
<dbReference type="InterPro" id="IPR029063">
    <property type="entry name" value="SAM-dependent_MTases_sf"/>
</dbReference>
<dbReference type="InterPro" id="IPR036388">
    <property type="entry name" value="WH-like_DNA-bd_sf"/>
</dbReference>
<dbReference type="InterPro" id="IPR036390">
    <property type="entry name" value="WH_DNA-bd_sf"/>
</dbReference>
<dbReference type="PANTHER" id="PTHR11746">
    <property type="entry name" value="O-METHYLTRANSFERASE"/>
    <property type="match status" value="1"/>
</dbReference>
<dbReference type="Pfam" id="PF08100">
    <property type="entry name" value="Dimerisation"/>
    <property type="match status" value="1"/>
</dbReference>
<dbReference type="Pfam" id="PF00891">
    <property type="entry name" value="Methyltransf_2"/>
    <property type="match status" value="1"/>
</dbReference>
<dbReference type="PIRSF" id="PIRSF005739">
    <property type="entry name" value="O-mtase"/>
    <property type="match status" value="1"/>
</dbReference>
<dbReference type="SUPFAM" id="SSF53335">
    <property type="entry name" value="S-adenosyl-L-methionine-dependent methyltransferases"/>
    <property type="match status" value="1"/>
</dbReference>
<dbReference type="SUPFAM" id="SSF46785">
    <property type="entry name" value="Winged helix' DNA-binding domain"/>
    <property type="match status" value="1"/>
</dbReference>
<dbReference type="PROSITE" id="PS51683">
    <property type="entry name" value="SAM_OMT_II"/>
    <property type="match status" value="1"/>
</dbReference>
<sequence length="352" mass="39541">MASSINGRKPSEIFKAQALLYKHIYAFIDSMSLKWAVGMNIPNIIHNHGKPISLSNLVSILQVPSSKIGNVRRLMRYLAHNGFFEIITKEEESYALTVASELLVRGSDLCLAPMVECVLDPTLSGSYHELKKWIYEEDLTLFGVTLGSGFWDFLDKNPEYNTSFNDAMASDSKLINLALRDCDFVFDGLESIVDVGGGTGTTAKIICETFPKLKCIVFDRPQVVENLSGSNNLTYVGGDMFTSIPNADAVLLKYILHNWTDKDCLRILKKCKEAVTNDGKRGKVTIIDMVINEKKDENQVTQIKLLMDVNMACLNGKERNEEEWKKLFIEAGFQHYKISPLTGFLSLIEIYP</sequence>
<accession>O22309</accession>
<organism>
    <name type="scientific">Medicago sativa</name>
    <name type="common">Alfalfa</name>
    <dbReference type="NCBI Taxonomy" id="3879"/>
    <lineage>
        <taxon>Eukaryota</taxon>
        <taxon>Viridiplantae</taxon>
        <taxon>Streptophyta</taxon>
        <taxon>Embryophyta</taxon>
        <taxon>Tracheophyta</taxon>
        <taxon>Spermatophyta</taxon>
        <taxon>Magnoliopsida</taxon>
        <taxon>eudicotyledons</taxon>
        <taxon>Gunneridae</taxon>
        <taxon>Pentapetalae</taxon>
        <taxon>rosids</taxon>
        <taxon>fabids</taxon>
        <taxon>Fabales</taxon>
        <taxon>Fabaceae</taxon>
        <taxon>Papilionoideae</taxon>
        <taxon>50 kb inversion clade</taxon>
        <taxon>NPAAA clade</taxon>
        <taxon>Hologalegina</taxon>
        <taxon>IRL clade</taxon>
        <taxon>Trifolieae</taxon>
        <taxon>Medicago</taxon>
    </lineage>
</organism>
<comment type="function">
    <text>Transfers a methyl group to 7-hydroxyls of the isoflavones daidzein, genistein and 6,7,4'-trihydroxyisoflavone. Can also methylate (+)6a-hydroxymaackiain with lower efficiency.</text>
</comment>
<comment type="catalytic activity">
    <reaction>
        <text>a 7-hydroxyisoflavone + S-adenosyl-L-methionine = a 7-methoxyisoflavone + S-adenosyl-L-homocysteine + H(+)</text>
        <dbReference type="Rhea" id="RHEA:17933"/>
        <dbReference type="ChEBI" id="CHEBI:15378"/>
        <dbReference type="ChEBI" id="CHEBI:55465"/>
        <dbReference type="ChEBI" id="CHEBI:57856"/>
        <dbReference type="ChEBI" id="CHEBI:59789"/>
        <dbReference type="ChEBI" id="CHEBI:140356"/>
        <dbReference type="EC" id="2.1.1.150"/>
    </reaction>
</comment>
<comment type="pathway">
    <text>Phytoalexin biosynthesis; medicarpin biosynthesis.</text>
</comment>
<comment type="subunit">
    <text>Homodimer.</text>
</comment>
<comment type="similarity">
    <text evidence="1">Belongs to the class I-like SAM-binding methyltransferase superfamily. Cation-independent O-methyltransferase family. COMT subfamily.</text>
</comment>